<gene>
    <name type="primary">hdc</name>
</gene>
<dbReference type="EC" id="4.1.1.22"/>
<dbReference type="EMBL" id="AB075222">
    <property type="protein sequence ID" value="BAB97311.1"/>
    <property type="molecule type" value="Genomic_DNA"/>
</dbReference>
<dbReference type="SMR" id="Q8L0Z4"/>
<dbReference type="PaxDb" id="1286170-RORB6_18940"/>
<dbReference type="eggNOG" id="COG0076">
    <property type="taxonomic scope" value="Bacteria"/>
</dbReference>
<dbReference type="GO" id="GO:0004398">
    <property type="term" value="F:histidine decarboxylase activity"/>
    <property type="evidence" value="ECO:0007669"/>
    <property type="project" value="UniProtKB-EC"/>
</dbReference>
<dbReference type="GO" id="GO:0030170">
    <property type="term" value="F:pyridoxal phosphate binding"/>
    <property type="evidence" value="ECO:0007669"/>
    <property type="project" value="InterPro"/>
</dbReference>
<dbReference type="GO" id="GO:0019752">
    <property type="term" value="P:carboxylic acid metabolic process"/>
    <property type="evidence" value="ECO:0007669"/>
    <property type="project" value="InterPro"/>
</dbReference>
<dbReference type="Gene3D" id="3.40.640.10">
    <property type="entry name" value="Type I PLP-dependent aspartate aminotransferase-like (Major domain)"/>
    <property type="match status" value="1"/>
</dbReference>
<dbReference type="InterPro" id="IPR051151">
    <property type="entry name" value="Group_II_Decarboxylase"/>
</dbReference>
<dbReference type="InterPro" id="IPR002129">
    <property type="entry name" value="PyrdxlP-dep_de-COase"/>
</dbReference>
<dbReference type="InterPro" id="IPR015424">
    <property type="entry name" value="PyrdxlP-dep_Trfase"/>
</dbReference>
<dbReference type="InterPro" id="IPR015421">
    <property type="entry name" value="PyrdxlP-dep_Trfase_major"/>
</dbReference>
<dbReference type="InterPro" id="IPR021115">
    <property type="entry name" value="Pyridoxal-P_BS"/>
</dbReference>
<dbReference type="NCBIfam" id="NF002748">
    <property type="entry name" value="PRK02769.1"/>
    <property type="match status" value="1"/>
</dbReference>
<dbReference type="PANTHER" id="PTHR46101">
    <property type="match status" value="1"/>
</dbReference>
<dbReference type="PANTHER" id="PTHR46101:SF2">
    <property type="entry name" value="SERINE DECARBOXYLASE"/>
    <property type="match status" value="1"/>
</dbReference>
<dbReference type="Pfam" id="PF00282">
    <property type="entry name" value="Pyridoxal_deC"/>
    <property type="match status" value="1"/>
</dbReference>
<dbReference type="SUPFAM" id="SSF53383">
    <property type="entry name" value="PLP-dependent transferases"/>
    <property type="match status" value="1"/>
</dbReference>
<dbReference type="PROSITE" id="PS00392">
    <property type="entry name" value="DDC_GAD_HDC_YDC"/>
    <property type="match status" value="1"/>
</dbReference>
<organism>
    <name type="scientific">Raoultella ornithinolytica</name>
    <name type="common">Klebsiella ornithinolytica</name>
    <dbReference type="NCBI Taxonomy" id="54291"/>
    <lineage>
        <taxon>Bacteria</taxon>
        <taxon>Pseudomonadati</taxon>
        <taxon>Pseudomonadota</taxon>
        <taxon>Gammaproteobacteria</taxon>
        <taxon>Enterobacterales</taxon>
        <taxon>Enterobacteriaceae</taxon>
        <taxon>Klebsiella/Raoultella group</taxon>
        <taxon>Raoultella</taxon>
    </lineage>
</organism>
<accession>Q8L0Z4</accession>
<protein>
    <recommendedName>
        <fullName>Histidine decarboxylase</fullName>
        <shortName>HDC</shortName>
        <ecNumber>4.1.1.22</ecNumber>
    </recommendedName>
</protein>
<name>DCHS_RAOOR</name>
<feature type="chain" id="PRO_0000146956" description="Histidine decarboxylase">
    <location>
        <begin position="1" status="less than"/>
        <end position="228" status="greater than"/>
    </location>
</feature>
<feature type="binding site" evidence="1">
    <location>
        <position position="30"/>
    </location>
    <ligand>
        <name>substrate</name>
    </ligand>
</feature>
<feature type="modified residue" description="N6-(pyridoxal phosphate)lysine" evidence="1">
    <location>
        <position position="143"/>
    </location>
</feature>
<feature type="non-terminal residue">
    <location>
        <position position="1"/>
    </location>
</feature>
<feature type="non-terminal residue">
    <location>
        <position position="228"/>
    </location>
</feature>
<reference key="1">
    <citation type="journal article" date="2002" name="Appl. Environ. Microbiol.">
        <title>Klebsiella pneumoniae produces no histamine: Raoultella planticola and Raoultella ornithinolytica strains are histamine producers.</title>
        <authorList>
            <person name="Kanki M."/>
            <person name="Yoda T."/>
            <person name="Tsukamoto T."/>
            <person name="Shibata T."/>
        </authorList>
    </citation>
    <scope>NUCLEOTIDE SEQUENCE [GENOMIC DNA]</scope>
    <source>
        <strain>19-2</strain>
    </source>
</reference>
<comment type="catalytic activity">
    <reaction>
        <text>L-histidine + H(+) = histamine + CO2</text>
        <dbReference type="Rhea" id="RHEA:20840"/>
        <dbReference type="ChEBI" id="CHEBI:15378"/>
        <dbReference type="ChEBI" id="CHEBI:16526"/>
        <dbReference type="ChEBI" id="CHEBI:57595"/>
        <dbReference type="ChEBI" id="CHEBI:58432"/>
        <dbReference type="EC" id="4.1.1.22"/>
    </reaction>
</comment>
<comment type="cofactor">
    <cofactor evidence="1">
        <name>pyridoxal 5'-phosphate</name>
        <dbReference type="ChEBI" id="CHEBI:597326"/>
    </cofactor>
</comment>
<comment type="subunit">
    <text evidence="1">Homotetramer.</text>
</comment>
<comment type="miscellaneous">
    <text>This histamine-producing bacteria (HPB) causes histamine fish poisoning.</text>
</comment>
<comment type="similarity">
    <text evidence="2">Belongs to the group II decarboxylase family.</text>
</comment>
<proteinExistence type="inferred from homology"/>
<evidence type="ECO:0000250" key="1"/>
<evidence type="ECO:0000305" key="2"/>
<keyword id="KW-0210">Decarboxylase</keyword>
<keyword id="KW-0456">Lyase</keyword>
<keyword id="KW-0663">Pyridoxal phosphate</keyword>
<sequence length="228" mass="25560">NGGTEGNMFGCYLGREIFPNGTLYYSKDTHYSVAKIVKLLRIKSTLVESQPNGEMDYADLIKKIKRDNEKHPIIFANIGTTVRGAIDNIAIIQQSISELGIERKDYYLHADAALSGMILPFVDNPQPFNFADGIDSIGVSGHKMIGSPIPCGIVVAKKKNVDRISVEIDYISAHDKTISGSRNGHTPLMMWEAIRSHSWEEWRRRIERSLNMAQYAVDRFQSAGIDAW</sequence>